<sequence length="147" mass="16166">MSEAKDFLRDLLDQVRAGDSYGQLDRFSDSQLLAPFVVTKEQRRTIATNCDLDIATAARLRSFYQAVAAATEKATGAFTTTILDLNSEGFGRVIIFAGRLVVLDNALRDVQRFGFNSSEELAARGEALVLGASKLIERWSEVARDDS</sequence>
<comment type="similarity">
    <text evidence="1">Belongs to the UPF0460 family.</text>
</comment>
<accession>P46042</accession>
<organism>
    <name type="scientific">Frankia alni</name>
    <dbReference type="NCBI Taxonomy" id="1859"/>
    <lineage>
        <taxon>Bacteria</taxon>
        <taxon>Bacillati</taxon>
        <taxon>Actinomycetota</taxon>
        <taxon>Actinomycetes</taxon>
        <taxon>Frankiales</taxon>
        <taxon>Frankiaceae</taxon>
        <taxon>Frankia</taxon>
    </lineage>
</organism>
<dbReference type="EMBL" id="L29299">
    <property type="protein sequence ID" value="AAC82971.1"/>
    <property type="molecule type" value="Genomic_DNA"/>
</dbReference>
<dbReference type="PIR" id="T09233">
    <property type="entry name" value="T09233"/>
</dbReference>
<dbReference type="SMR" id="P46042"/>
<dbReference type="GO" id="GO:0009399">
    <property type="term" value="P:nitrogen fixation"/>
    <property type="evidence" value="ECO:0007669"/>
    <property type="project" value="UniProtKB-KW"/>
</dbReference>
<dbReference type="Gene3D" id="1.10.3100.20">
    <property type="entry name" value="Protein of unknown function DUF269"/>
    <property type="match status" value="1"/>
</dbReference>
<dbReference type="InterPro" id="IPR004952">
    <property type="entry name" value="NifX-assoc_nitrogen_fix"/>
</dbReference>
<dbReference type="NCBIfam" id="TIGR02935">
    <property type="entry name" value="NifX-associated nitrogen fixation protein"/>
    <property type="match status" value="1"/>
</dbReference>
<dbReference type="Pfam" id="PF03270">
    <property type="entry name" value="DUF269"/>
    <property type="match status" value="1"/>
</dbReference>
<dbReference type="PIRSF" id="PIRSF005788">
    <property type="entry name" value="NifK"/>
    <property type="match status" value="1"/>
</dbReference>
<feature type="chain" id="PRO_0000066330" description="UPF0460 protein in nifX-nifW intergenic region">
    <location>
        <begin position="1"/>
        <end position="147"/>
    </location>
</feature>
<protein>
    <recommendedName>
        <fullName>UPF0460 protein in nifX-nifW intergenic region</fullName>
    </recommendedName>
    <alternativeName>
        <fullName>ORF3</fullName>
    </alternativeName>
</protein>
<keyword id="KW-0535">Nitrogen fixation</keyword>
<proteinExistence type="inferred from homology"/>
<reference key="1">
    <citation type="journal article" date="1995" name="Gene">
        <title>Sequences of nifX, nifW, nifZ, nifB and two ORF in the Frankia nitrogen fixation gene cluster.</title>
        <authorList>
            <person name="Harriott O.T."/>
            <person name="Hosted T.J."/>
            <person name="Benson D.R."/>
        </authorList>
    </citation>
    <scope>NUCLEOTIDE SEQUENCE [GENOMIC DNA]</scope>
    <source>
        <strain>CpI1</strain>
    </source>
</reference>
<evidence type="ECO:0000305" key="1"/>
<name>YNI3_FRAAL</name>